<comment type="function">
    <text evidence="1">Involved in the biosynthesis of sulfomenaquinone (SMK, initially named S881 on the basis of its mass), which is localized in the outer envelope of M.bovis and negatively regulates its virulence. Catalyzes the transfer of a sulfonate group from 3'-phosphoadenosine-5'-phosphosulfate (PAPS) to omega-hydroxy-beta-dihydromenaquinone-9, generating omega-sulfo-beta-dihydromenaquinone-9 (sulfomenaquinone).</text>
</comment>
<comment type="catalytic activity">
    <reaction evidence="1">
        <text>omega-hydroxy-beta-dihydromenaquinone-9 + 3'-phosphoadenylyl sulfate = omega-sulfo-beta-dihydromenaquinone-9 + adenosine 3',5'-bisphosphate + H(+)</text>
        <dbReference type="Rhea" id="RHEA:58892"/>
        <dbReference type="ChEBI" id="CHEBI:15378"/>
        <dbReference type="ChEBI" id="CHEBI:58339"/>
        <dbReference type="ChEBI" id="CHEBI:58343"/>
        <dbReference type="ChEBI" id="CHEBI:140189"/>
        <dbReference type="ChEBI" id="CHEBI:142861"/>
        <dbReference type="EC" id="2.8.2.40"/>
    </reaction>
    <physiologicalReaction direction="left-to-right" evidence="1">
        <dbReference type="Rhea" id="RHEA:58893"/>
    </physiologicalReaction>
</comment>
<comment type="similarity">
    <text evidence="2">Belongs to the Stf3 family.</text>
</comment>
<dbReference type="EC" id="2.8.2.40" evidence="1"/>
<dbReference type="EMBL" id="LT708304">
    <property type="protein sequence ID" value="SIU00901.1"/>
    <property type="molecule type" value="Genomic_DNA"/>
</dbReference>
<dbReference type="RefSeq" id="NP_855939.1">
    <property type="nucleotide sequence ID" value="NC_002945.3"/>
</dbReference>
<dbReference type="RefSeq" id="WP_003411661.1">
    <property type="nucleotide sequence ID" value="NC_002945.4"/>
</dbReference>
<dbReference type="SMR" id="P64964"/>
<dbReference type="KEGG" id="mbo:BQ2027_MB2290C"/>
<dbReference type="PATRIC" id="fig|233413.5.peg.2515"/>
<dbReference type="Proteomes" id="UP000001419">
    <property type="component" value="Chromosome"/>
</dbReference>
<dbReference type="GO" id="GO:0016740">
    <property type="term" value="F:transferase activity"/>
    <property type="evidence" value="ECO:0007669"/>
    <property type="project" value="UniProtKB-KW"/>
</dbReference>
<dbReference type="FunFam" id="3.40.50.300:FF:002618">
    <property type="entry name" value="PAPS-dependent sulfotransferase Stf3"/>
    <property type="match status" value="1"/>
</dbReference>
<dbReference type="Gene3D" id="3.40.50.300">
    <property type="entry name" value="P-loop containing nucleotide triphosphate hydrolases"/>
    <property type="match status" value="1"/>
</dbReference>
<dbReference type="InterPro" id="IPR027417">
    <property type="entry name" value="P-loop_NTPase"/>
</dbReference>
<dbReference type="InterPro" id="IPR052736">
    <property type="entry name" value="Stf3_sulfotransferase"/>
</dbReference>
<dbReference type="PANTHER" id="PTHR36451:SF1">
    <property type="entry name" value="OMEGA-HYDROXY-BETA-DIHYDROMENAQUINONE-9 SULFOTRANSFERASE STF3"/>
    <property type="match status" value="1"/>
</dbReference>
<dbReference type="PANTHER" id="PTHR36451">
    <property type="entry name" value="PAPS-DEPENDENT SULFOTRANSFERASE STF3"/>
    <property type="match status" value="1"/>
</dbReference>
<dbReference type="Pfam" id="PF13469">
    <property type="entry name" value="Sulfotransfer_3"/>
    <property type="match status" value="1"/>
</dbReference>
<dbReference type="SUPFAM" id="SSF52540">
    <property type="entry name" value="P-loop containing nucleoside triphosphate hydrolases"/>
    <property type="match status" value="1"/>
</dbReference>
<accession>P64964</accession>
<accession>A0A1R3Y0P7</accession>
<accession>Q50695</accession>
<accession>X2BJR9</accession>
<sequence length="388" mass="46062">MKALRSSSRLSRWREWAAPLWVGCNFSAWMRLLIRNRFAVHHSRWHFAVLYTFLSMVNSCLGLWQKIVFGRRVAETVIADPPIFIVGHWRTGTTLLHELLVVDDRHTGPTGYECLAPHHFLLTEWFAPYVEFLVSKHRAMDNMDLSLHHPQEDEFVWCMQGLPSPYLTIAFPNRPPQYEEYLDLEQVAPRELEIWKRTLFRFVQQVYFRRRKTVILKNPTHSFRIKVLLEVFPQAKFIHIVRDPYVVYPSTIHLHKALYRIHGLQQPTFDGLDDKVVSTYVDLYRKLDEGRELVDPTRFYELRYEDLIGDPEGQLRRLYQHLGLGDFECYLPRLRQYLADHADYKTNSYQLTVEQRAIVDEHWGEIIDRYGYDRHTPEPARLRPAVGG</sequence>
<organism>
    <name type="scientific">Mycobacterium bovis (strain ATCC BAA-935 / AF2122/97)</name>
    <dbReference type="NCBI Taxonomy" id="233413"/>
    <lineage>
        <taxon>Bacteria</taxon>
        <taxon>Bacillati</taxon>
        <taxon>Actinomycetota</taxon>
        <taxon>Actinomycetes</taxon>
        <taxon>Mycobacteriales</taxon>
        <taxon>Mycobacteriaceae</taxon>
        <taxon>Mycobacterium</taxon>
        <taxon>Mycobacterium tuberculosis complex</taxon>
    </lineage>
</organism>
<gene>
    <name evidence="1" type="primary">stf3</name>
    <name type="ordered locus">BQ2027_MB2290C</name>
</gene>
<name>STF3_MYCBO</name>
<feature type="chain" id="PRO_0000103994" description="Omega-hydroxy-beta-dihydromenaquinone-9 sulfotransferase Stf3">
    <location>
        <begin position="1"/>
        <end position="388"/>
    </location>
</feature>
<reference key="1">
    <citation type="journal article" date="2003" name="Proc. Natl. Acad. Sci. U.S.A.">
        <title>The complete genome sequence of Mycobacterium bovis.</title>
        <authorList>
            <person name="Garnier T."/>
            <person name="Eiglmeier K."/>
            <person name="Camus J.-C."/>
            <person name="Medina N."/>
            <person name="Mansoor H."/>
            <person name="Pryor M."/>
            <person name="Duthoy S."/>
            <person name="Grondin S."/>
            <person name="Lacroix C."/>
            <person name="Monsempe C."/>
            <person name="Simon S."/>
            <person name="Harris B."/>
            <person name="Atkin R."/>
            <person name="Doggett J."/>
            <person name="Mayes R."/>
            <person name="Keating L."/>
            <person name="Wheeler P.R."/>
            <person name="Parkhill J."/>
            <person name="Barrell B.G."/>
            <person name="Cole S.T."/>
            <person name="Gordon S.V."/>
            <person name="Hewinson R.G."/>
        </authorList>
    </citation>
    <scope>NUCLEOTIDE SEQUENCE [LARGE SCALE GENOMIC DNA]</scope>
    <source>
        <strain>ATCC BAA-935 / AF2122/97</strain>
    </source>
</reference>
<reference key="2">
    <citation type="journal article" date="2017" name="Genome Announc.">
        <title>Updated reference genome sequence and annotation of Mycobacterium bovis AF2122/97.</title>
        <authorList>
            <person name="Malone K.M."/>
            <person name="Farrell D."/>
            <person name="Stuber T.P."/>
            <person name="Schubert O.T."/>
            <person name="Aebersold R."/>
            <person name="Robbe-Austerman S."/>
            <person name="Gordon S.V."/>
        </authorList>
    </citation>
    <scope>NUCLEOTIDE SEQUENCE [LARGE SCALE GENOMIC DNA]</scope>
    <scope>GENOME REANNOTATION</scope>
    <source>
        <strain>ATCC BAA-935 / AF2122/97</strain>
    </source>
</reference>
<keyword id="KW-1185">Reference proteome</keyword>
<keyword id="KW-0808">Transferase</keyword>
<protein>
    <recommendedName>
        <fullName evidence="1">Omega-hydroxy-beta-dihydromenaquinone-9 sulfotransferase Stf3</fullName>
        <ecNumber evidence="1">2.8.2.40</ecNumber>
    </recommendedName>
    <alternativeName>
        <fullName evidence="1">PAPS-dependent sulfotransferase Stf3</fullName>
    </alternativeName>
</protein>
<proteinExistence type="inferred from homology"/>
<evidence type="ECO:0000250" key="1">
    <source>
        <dbReference type="UniProtKB" id="P9WLG1"/>
    </source>
</evidence>
<evidence type="ECO:0000305" key="2"/>